<evidence type="ECO:0000255" key="1">
    <source>
        <dbReference type="HAMAP-Rule" id="MF_02015"/>
    </source>
</evidence>
<protein>
    <recommendedName>
        <fullName evidence="1">Nucleoid occlusion protein</fullName>
        <shortName evidence="1">Noc</shortName>
    </recommendedName>
</protein>
<keyword id="KW-0131">Cell cycle</keyword>
<keyword id="KW-0132">Cell division</keyword>
<keyword id="KW-0963">Cytoplasm</keyword>
<keyword id="KW-0238">DNA-binding</keyword>
<keyword id="KW-0717">Septation</keyword>
<reference key="1">
    <citation type="submission" date="2008-10" db="EMBL/GenBank/DDBJ databases">
        <title>Genome sequence of Bacillus cereus B4264.</title>
        <authorList>
            <person name="Dodson R.J."/>
            <person name="Durkin A.S."/>
            <person name="Rosovitz M.J."/>
            <person name="Rasko D.A."/>
            <person name="Hoffmaster A."/>
            <person name="Ravel J."/>
            <person name="Sutton G."/>
        </authorList>
    </citation>
    <scope>NUCLEOTIDE SEQUENCE [LARGE SCALE GENOMIC DNA]</scope>
    <source>
        <strain>B4264</strain>
    </source>
</reference>
<organism>
    <name type="scientific">Bacillus cereus (strain B4264)</name>
    <dbReference type="NCBI Taxonomy" id="405532"/>
    <lineage>
        <taxon>Bacteria</taxon>
        <taxon>Bacillati</taxon>
        <taxon>Bacillota</taxon>
        <taxon>Bacilli</taxon>
        <taxon>Bacillales</taxon>
        <taxon>Bacillaceae</taxon>
        <taxon>Bacillus</taxon>
        <taxon>Bacillus cereus group</taxon>
    </lineage>
</organism>
<feature type="chain" id="PRO_1000189532" description="Nucleoid occlusion protein">
    <location>
        <begin position="1"/>
        <end position="290"/>
    </location>
</feature>
<feature type="DNA-binding region" description="H-T-H motif" evidence="1">
    <location>
        <begin position="153"/>
        <end position="172"/>
    </location>
</feature>
<comment type="function">
    <text evidence="1">Effects nucleoid occlusion by binding relatively nonspecifically to DNA and preventing the assembly of the division machinery in the vicinity of the nucleoid, especially under conditions that disturb the cell cycle. It helps to coordinate cell division and chromosome segregation by preventing the formation of the Z ring through the nucleoid, which would cause chromosome breakage.</text>
</comment>
<comment type="subcellular location">
    <subcellularLocation>
        <location evidence="1">Cytoplasm</location>
        <location evidence="1">Nucleoid</location>
    </subcellularLocation>
</comment>
<comment type="similarity">
    <text evidence="1">Belongs to the ParB family.</text>
</comment>
<sequence>MKNTFSRLFGFGDKESEFELQDESHEEIDKKVYEEIQEIPIVNITPNRYQPRTVFDDARIDELALTIRTHGLIQPIVVRQYEDDKYEIIAGERRFRAATKLGWEKVPAIIKNLNDTETASVALIENLQREELTAIEEAVAYQKLIELHNLTQEALAQRLGKGQSTIANKLRLLKLPEEIKSALLEKSITERHARALIPLKNEELQLKVLQEIVEKQLNVKQTEERIAKLLEEAKPKRKAKQKAVSRDTRIAMNTIRQSLQMVTESGLNVNSEEEEFDEYYQITIKIPKKK</sequence>
<dbReference type="EMBL" id="CP001176">
    <property type="protein sequence ID" value="ACK61627.1"/>
    <property type="molecule type" value="Genomic_DNA"/>
</dbReference>
<dbReference type="RefSeq" id="WP_000799016.1">
    <property type="nucleotide sequence ID" value="NZ_VEHB01000004.1"/>
</dbReference>
<dbReference type="SMR" id="B7HGE1"/>
<dbReference type="GeneID" id="72452131"/>
<dbReference type="KEGG" id="bcb:BCB4264_A5608"/>
<dbReference type="HOGENOM" id="CLU_023853_0_1_9"/>
<dbReference type="Proteomes" id="UP000007096">
    <property type="component" value="Chromosome"/>
</dbReference>
<dbReference type="GO" id="GO:0005694">
    <property type="term" value="C:chromosome"/>
    <property type="evidence" value="ECO:0007669"/>
    <property type="project" value="TreeGrafter"/>
</dbReference>
<dbReference type="GO" id="GO:0005737">
    <property type="term" value="C:cytoplasm"/>
    <property type="evidence" value="ECO:0007669"/>
    <property type="project" value="UniProtKB-UniRule"/>
</dbReference>
<dbReference type="GO" id="GO:0009295">
    <property type="term" value="C:nucleoid"/>
    <property type="evidence" value="ECO:0007669"/>
    <property type="project" value="UniProtKB-SubCell"/>
</dbReference>
<dbReference type="GO" id="GO:0003677">
    <property type="term" value="F:DNA binding"/>
    <property type="evidence" value="ECO:0007669"/>
    <property type="project" value="UniProtKB-UniRule"/>
</dbReference>
<dbReference type="GO" id="GO:0007059">
    <property type="term" value="P:chromosome segregation"/>
    <property type="evidence" value="ECO:0007669"/>
    <property type="project" value="TreeGrafter"/>
</dbReference>
<dbReference type="GO" id="GO:0000917">
    <property type="term" value="P:division septum assembly"/>
    <property type="evidence" value="ECO:0007669"/>
    <property type="project" value="UniProtKB-KW"/>
</dbReference>
<dbReference type="GO" id="GO:0045881">
    <property type="term" value="P:positive regulation of sporulation resulting in formation of a cellular spore"/>
    <property type="evidence" value="ECO:0007669"/>
    <property type="project" value="TreeGrafter"/>
</dbReference>
<dbReference type="CDD" id="cd16393">
    <property type="entry name" value="SPO0J_N"/>
    <property type="match status" value="1"/>
</dbReference>
<dbReference type="FunFam" id="1.10.10.2830:FF:000001">
    <property type="entry name" value="Chromosome partitioning protein ParB"/>
    <property type="match status" value="1"/>
</dbReference>
<dbReference type="FunFam" id="3.90.1530.30:FF:000001">
    <property type="entry name" value="Chromosome partitioning protein ParB"/>
    <property type="match status" value="1"/>
</dbReference>
<dbReference type="Gene3D" id="1.10.10.2830">
    <property type="match status" value="1"/>
</dbReference>
<dbReference type="Gene3D" id="3.90.1530.30">
    <property type="match status" value="1"/>
</dbReference>
<dbReference type="HAMAP" id="MF_02015">
    <property type="entry name" value="ParB_Noc"/>
    <property type="match status" value="1"/>
</dbReference>
<dbReference type="InterPro" id="IPR050336">
    <property type="entry name" value="Chromosome_partition/occlusion"/>
</dbReference>
<dbReference type="InterPro" id="IPR041468">
    <property type="entry name" value="HTH_ParB/Spo0J"/>
</dbReference>
<dbReference type="InterPro" id="IPR023705">
    <property type="entry name" value="Nucleoid_occlusion_protein"/>
</dbReference>
<dbReference type="InterPro" id="IPR004437">
    <property type="entry name" value="ParB/RepB/Spo0J"/>
</dbReference>
<dbReference type="InterPro" id="IPR003115">
    <property type="entry name" value="ParB/Sulfiredoxin_dom"/>
</dbReference>
<dbReference type="InterPro" id="IPR036086">
    <property type="entry name" value="ParB/Sulfiredoxin_sf"/>
</dbReference>
<dbReference type="NCBIfam" id="TIGR04285">
    <property type="entry name" value="nucleoid_noc"/>
    <property type="match status" value="1"/>
</dbReference>
<dbReference type="NCBIfam" id="TIGR00180">
    <property type="entry name" value="parB_part"/>
    <property type="match status" value="1"/>
</dbReference>
<dbReference type="PANTHER" id="PTHR33375">
    <property type="entry name" value="CHROMOSOME-PARTITIONING PROTEIN PARB-RELATED"/>
    <property type="match status" value="1"/>
</dbReference>
<dbReference type="PANTHER" id="PTHR33375:SF8">
    <property type="entry name" value="NUCLEOID OCCLUSION PROTEIN"/>
    <property type="match status" value="1"/>
</dbReference>
<dbReference type="Pfam" id="PF17762">
    <property type="entry name" value="HTH_ParB"/>
    <property type="match status" value="1"/>
</dbReference>
<dbReference type="Pfam" id="PF02195">
    <property type="entry name" value="ParBc"/>
    <property type="match status" value="1"/>
</dbReference>
<dbReference type="SMART" id="SM00470">
    <property type="entry name" value="ParB"/>
    <property type="match status" value="1"/>
</dbReference>
<dbReference type="SUPFAM" id="SSF110849">
    <property type="entry name" value="ParB/Sulfiredoxin"/>
    <property type="match status" value="1"/>
</dbReference>
<name>NOC_BACC4</name>
<accession>B7HGE1</accession>
<gene>
    <name evidence="1" type="primary">noc</name>
    <name type="ordered locus">BCB4264_A5608</name>
</gene>
<proteinExistence type="inferred from homology"/>